<keyword id="KW-0456">Lyase</keyword>
<keyword id="KW-0460">Magnesium</keyword>
<keyword id="KW-0464">Manganese</keyword>
<keyword id="KW-0479">Metal-binding</keyword>
<keyword id="KW-0686">Riboflavin biosynthesis</keyword>
<gene>
    <name evidence="1" type="primary">ribB</name>
    <name type="ordered locus">SeSA_A3383</name>
</gene>
<sequence length="217" mass="23310">MNQTLLSSFGTPFERVELALDALREGRGVMVLDDEDRENEGDMIFPAETMTVEQMALTIRHGSGIVCLCITEDRRKQLDLPMMVENNTSAYGTGFTVTIEAAEGVTTGVSAADRVTTVRAAIKDGAKPSDLNRPGHVFPLRAQAGGVLTRGGHTEATIDLMTLAGFKPAGVLCELTNDDGTMARAPECIAFAGQHNMAVVTIEDLVAYRQAHERKAS</sequence>
<feature type="chain" id="PRO_1000098290" description="3,4-dihydroxy-2-butanone 4-phosphate synthase">
    <location>
        <begin position="1"/>
        <end position="217"/>
    </location>
</feature>
<feature type="binding site" evidence="1">
    <location>
        <begin position="37"/>
        <end position="38"/>
    </location>
    <ligand>
        <name>D-ribulose 5-phosphate</name>
        <dbReference type="ChEBI" id="CHEBI:58121"/>
    </ligand>
</feature>
<feature type="binding site" evidence="1">
    <location>
        <position position="38"/>
    </location>
    <ligand>
        <name>Mg(2+)</name>
        <dbReference type="ChEBI" id="CHEBI:18420"/>
        <label>1</label>
    </ligand>
</feature>
<feature type="binding site" evidence="1">
    <location>
        <position position="38"/>
    </location>
    <ligand>
        <name>Mg(2+)</name>
        <dbReference type="ChEBI" id="CHEBI:18420"/>
        <label>2</label>
    </ligand>
</feature>
<feature type="binding site" evidence="1">
    <location>
        <position position="42"/>
    </location>
    <ligand>
        <name>D-ribulose 5-phosphate</name>
        <dbReference type="ChEBI" id="CHEBI:58121"/>
    </ligand>
</feature>
<feature type="binding site" evidence="1">
    <location>
        <begin position="150"/>
        <end position="154"/>
    </location>
    <ligand>
        <name>D-ribulose 5-phosphate</name>
        <dbReference type="ChEBI" id="CHEBI:58121"/>
    </ligand>
</feature>
<feature type="binding site" evidence="1">
    <location>
        <position position="153"/>
    </location>
    <ligand>
        <name>Mg(2+)</name>
        <dbReference type="ChEBI" id="CHEBI:18420"/>
        <label>2</label>
    </ligand>
</feature>
<feature type="binding site" evidence="1">
    <location>
        <position position="174"/>
    </location>
    <ligand>
        <name>D-ribulose 5-phosphate</name>
        <dbReference type="ChEBI" id="CHEBI:58121"/>
    </ligand>
</feature>
<feature type="site" description="Essential for catalytic activity" evidence="1">
    <location>
        <position position="136"/>
    </location>
</feature>
<feature type="site" description="Essential for catalytic activity" evidence="1">
    <location>
        <position position="174"/>
    </location>
</feature>
<reference key="1">
    <citation type="journal article" date="2011" name="J. Bacteriol.">
        <title>Comparative genomics of 28 Salmonella enterica isolates: evidence for CRISPR-mediated adaptive sublineage evolution.</title>
        <authorList>
            <person name="Fricke W.F."/>
            <person name="Mammel M.K."/>
            <person name="McDermott P.F."/>
            <person name="Tartera C."/>
            <person name="White D.G."/>
            <person name="Leclerc J.E."/>
            <person name="Ravel J."/>
            <person name="Cebula T.A."/>
        </authorList>
    </citation>
    <scope>NUCLEOTIDE SEQUENCE [LARGE SCALE GENOMIC DNA]</scope>
    <source>
        <strain>CVM19633</strain>
    </source>
</reference>
<accession>B4TVS9</accession>
<evidence type="ECO:0000255" key="1">
    <source>
        <dbReference type="HAMAP-Rule" id="MF_00180"/>
    </source>
</evidence>
<protein>
    <recommendedName>
        <fullName evidence="1">3,4-dihydroxy-2-butanone 4-phosphate synthase</fullName>
        <shortName evidence="1">DHBP synthase</shortName>
        <ecNumber evidence="1">4.1.99.12</ecNumber>
    </recommendedName>
</protein>
<comment type="function">
    <text evidence="1">Catalyzes the conversion of D-ribulose 5-phosphate to formate and 3,4-dihydroxy-2-butanone 4-phosphate.</text>
</comment>
<comment type="catalytic activity">
    <reaction evidence="1">
        <text>D-ribulose 5-phosphate = (2S)-2-hydroxy-3-oxobutyl phosphate + formate + H(+)</text>
        <dbReference type="Rhea" id="RHEA:18457"/>
        <dbReference type="ChEBI" id="CHEBI:15378"/>
        <dbReference type="ChEBI" id="CHEBI:15740"/>
        <dbReference type="ChEBI" id="CHEBI:58121"/>
        <dbReference type="ChEBI" id="CHEBI:58830"/>
        <dbReference type="EC" id="4.1.99.12"/>
    </reaction>
</comment>
<comment type="cofactor">
    <cofactor evidence="1">
        <name>Mg(2+)</name>
        <dbReference type="ChEBI" id="CHEBI:18420"/>
    </cofactor>
    <cofactor evidence="1">
        <name>Mn(2+)</name>
        <dbReference type="ChEBI" id="CHEBI:29035"/>
    </cofactor>
    <text evidence="1">Binds 2 divalent metal cations per subunit. Magnesium or manganese.</text>
</comment>
<comment type="pathway">
    <text evidence="1">Cofactor biosynthesis; riboflavin biosynthesis; 2-hydroxy-3-oxobutyl phosphate from D-ribulose 5-phosphate: step 1/1.</text>
</comment>
<comment type="subunit">
    <text evidence="1">Homodimer.</text>
</comment>
<comment type="similarity">
    <text evidence="1">Belongs to the DHBP synthase family.</text>
</comment>
<proteinExistence type="inferred from homology"/>
<dbReference type="EC" id="4.1.99.12" evidence="1"/>
<dbReference type="EMBL" id="CP001127">
    <property type="protein sequence ID" value="ACF89727.1"/>
    <property type="molecule type" value="Genomic_DNA"/>
</dbReference>
<dbReference type="RefSeq" id="WP_001076978.1">
    <property type="nucleotide sequence ID" value="NC_011094.1"/>
</dbReference>
<dbReference type="SMR" id="B4TVS9"/>
<dbReference type="KEGG" id="sew:SeSA_A3383"/>
<dbReference type="HOGENOM" id="CLU_020273_3_0_6"/>
<dbReference type="UniPathway" id="UPA00275">
    <property type="reaction ID" value="UER00399"/>
</dbReference>
<dbReference type="Proteomes" id="UP000001865">
    <property type="component" value="Chromosome"/>
</dbReference>
<dbReference type="GO" id="GO:0005829">
    <property type="term" value="C:cytosol"/>
    <property type="evidence" value="ECO:0007669"/>
    <property type="project" value="TreeGrafter"/>
</dbReference>
<dbReference type="GO" id="GO:0008686">
    <property type="term" value="F:3,4-dihydroxy-2-butanone-4-phosphate synthase activity"/>
    <property type="evidence" value="ECO:0007669"/>
    <property type="project" value="UniProtKB-UniRule"/>
</dbReference>
<dbReference type="GO" id="GO:0000287">
    <property type="term" value="F:magnesium ion binding"/>
    <property type="evidence" value="ECO:0007669"/>
    <property type="project" value="UniProtKB-UniRule"/>
</dbReference>
<dbReference type="GO" id="GO:0030145">
    <property type="term" value="F:manganese ion binding"/>
    <property type="evidence" value="ECO:0007669"/>
    <property type="project" value="UniProtKB-UniRule"/>
</dbReference>
<dbReference type="GO" id="GO:0009231">
    <property type="term" value="P:riboflavin biosynthetic process"/>
    <property type="evidence" value="ECO:0007669"/>
    <property type="project" value="UniProtKB-UniRule"/>
</dbReference>
<dbReference type="FunFam" id="3.90.870.10:FF:000002">
    <property type="entry name" value="3,4-dihydroxy-2-butanone 4-phosphate synthase"/>
    <property type="match status" value="1"/>
</dbReference>
<dbReference type="Gene3D" id="3.90.870.10">
    <property type="entry name" value="DHBP synthase"/>
    <property type="match status" value="1"/>
</dbReference>
<dbReference type="HAMAP" id="MF_00180">
    <property type="entry name" value="RibB"/>
    <property type="match status" value="1"/>
</dbReference>
<dbReference type="InterPro" id="IPR017945">
    <property type="entry name" value="DHBP_synth_RibB-like_a/b_dom"/>
</dbReference>
<dbReference type="InterPro" id="IPR000422">
    <property type="entry name" value="DHBP_synthase_RibB"/>
</dbReference>
<dbReference type="NCBIfam" id="TIGR00506">
    <property type="entry name" value="ribB"/>
    <property type="match status" value="1"/>
</dbReference>
<dbReference type="PANTHER" id="PTHR21327:SF38">
    <property type="entry name" value="3,4-DIHYDROXY-2-BUTANONE 4-PHOSPHATE SYNTHASE"/>
    <property type="match status" value="1"/>
</dbReference>
<dbReference type="PANTHER" id="PTHR21327">
    <property type="entry name" value="GTP CYCLOHYDROLASE II-RELATED"/>
    <property type="match status" value="1"/>
</dbReference>
<dbReference type="Pfam" id="PF00926">
    <property type="entry name" value="DHBP_synthase"/>
    <property type="match status" value="1"/>
</dbReference>
<dbReference type="SUPFAM" id="SSF55821">
    <property type="entry name" value="YrdC/RibB"/>
    <property type="match status" value="1"/>
</dbReference>
<organism>
    <name type="scientific">Salmonella schwarzengrund (strain CVM19633)</name>
    <dbReference type="NCBI Taxonomy" id="439843"/>
    <lineage>
        <taxon>Bacteria</taxon>
        <taxon>Pseudomonadati</taxon>
        <taxon>Pseudomonadota</taxon>
        <taxon>Gammaproteobacteria</taxon>
        <taxon>Enterobacterales</taxon>
        <taxon>Enterobacteriaceae</taxon>
        <taxon>Salmonella</taxon>
    </lineage>
</organism>
<name>RIBB_SALSV</name>